<dbReference type="EMBL" id="D37946">
    <property type="protein sequence ID" value="BAA07160.1"/>
    <property type="molecule type" value="mRNA"/>
</dbReference>
<dbReference type="SMR" id="P41386"/>
<dbReference type="GO" id="GO:0005737">
    <property type="term" value="C:cytoplasm"/>
    <property type="evidence" value="ECO:0007669"/>
    <property type="project" value="UniProtKB-KW"/>
</dbReference>
<dbReference type="GO" id="GO:0005874">
    <property type="term" value="C:microtubule"/>
    <property type="evidence" value="ECO:0007669"/>
    <property type="project" value="UniProtKB-KW"/>
</dbReference>
<dbReference type="GO" id="GO:0005525">
    <property type="term" value="F:GTP binding"/>
    <property type="evidence" value="ECO:0007669"/>
    <property type="project" value="UniProtKB-KW"/>
</dbReference>
<dbReference type="GO" id="GO:0003924">
    <property type="term" value="F:GTPase activity"/>
    <property type="evidence" value="ECO:0007669"/>
    <property type="project" value="InterPro"/>
</dbReference>
<dbReference type="GO" id="GO:0005200">
    <property type="term" value="F:structural constituent of cytoskeleton"/>
    <property type="evidence" value="ECO:0007669"/>
    <property type="project" value="InterPro"/>
</dbReference>
<dbReference type="GO" id="GO:0007017">
    <property type="term" value="P:microtubule-based process"/>
    <property type="evidence" value="ECO:0007669"/>
    <property type="project" value="InterPro"/>
</dbReference>
<dbReference type="CDD" id="cd02187">
    <property type="entry name" value="beta_tubulin"/>
    <property type="match status" value="1"/>
</dbReference>
<dbReference type="FunFam" id="1.10.287.600:FF:000013">
    <property type="entry name" value="Tubulin beta chain"/>
    <property type="match status" value="1"/>
</dbReference>
<dbReference type="FunFam" id="3.30.1330.20:FF:000002">
    <property type="entry name" value="Tubulin beta chain"/>
    <property type="match status" value="1"/>
</dbReference>
<dbReference type="FunFam" id="3.40.50.1440:FF:000013">
    <property type="entry name" value="Tubulin beta chain"/>
    <property type="match status" value="1"/>
</dbReference>
<dbReference type="Gene3D" id="1.10.287.600">
    <property type="entry name" value="Helix hairpin bin"/>
    <property type="match status" value="1"/>
</dbReference>
<dbReference type="Gene3D" id="3.30.1330.20">
    <property type="entry name" value="Tubulin/FtsZ, C-terminal domain"/>
    <property type="match status" value="1"/>
</dbReference>
<dbReference type="Gene3D" id="3.40.50.1440">
    <property type="entry name" value="Tubulin/FtsZ, GTPase domain"/>
    <property type="match status" value="1"/>
</dbReference>
<dbReference type="InterPro" id="IPR002453">
    <property type="entry name" value="Beta_tubulin"/>
</dbReference>
<dbReference type="InterPro" id="IPR008280">
    <property type="entry name" value="Tub_FtsZ_C"/>
</dbReference>
<dbReference type="InterPro" id="IPR000217">
    <property type="entry name" value="Tubulin"/>
</dbReference>
<dbReference type="InterPro" id="IPR037103">
    <property type="entry name" value="Tubulin/FtsZ-like_C"/>
</dbReference>
<dbReference type="InterPro" id="IPR018316">
    <property type="entry name" value="Tubulin/FtsZ_2-layer-sand-dom"/>
</dbReference>
<dbReference type="InterPro" id="IPR036525">
    <property type="entry name" value="Tubulin/FtsZ_GTPase_sf"/>
</dbReference>
<dbReference type="InterPro" id="IPR023123">
    <property type="entry name" value="Tubulin_C"/>
</dbReference>
<dbReference type="InterPro" id="IPR017975">
    <property type="entry name" value="Tubulin_CS"/>
</dbReference>
<dbReference type="InterPro" id="IPR003008">
    <property type="entry name" value="Tubulin_FtsZ_GTPase"/>
</dbReference>
<dbReference type="PANTHER" id="PTHR11588">
    <property type="entry name" value="TUBULIN"/>
    <property type="match status" value="1"/>
</dbReference>
<dbReference type="Pfam" id="PF00091">
    <property type="entry name" value="Tubulin"/>
    <property type="match status" value="1"/>
</dbReference>
<dbReference type="Pfam" id="PF03953">
    <property type="entry name" value="Tubulin_C"/>
    <property type="match status" value="1"/>
</dbReference>
<dbReference type="PRINTS" id="PR01163">
    <property type="entry name" value="BETATUBULIN"/>
</dbReference>
<dbReference type="PRINTS" id="PR01161">
    <property type="entry name" value="TUBULIN"/>
</dbReference>
<dbReference type="SMART" id="SM00864">
    <property type="entry name" value="Tubulin"/>
    <property type="match status" value="1"/>
</dbReference>
<dbReference type="SMART" id="SM00865">
    <property type="entry name" value="Tubulin_C"/>
    <property type="match status" value="1"/>
</dbReference>
<dbReference type="SUPFAM" id="SSF55307">
    <property type="entry name" value="Tubulin C-terminal domain-like"/>
    <property type="match status" value="1"/>
</dbReference>
<dbReference type="SUPFAM" id="SSF52490">
    <property type="entry name" value="Tubulin nucleotide-binding domain-like"/>
    <property type="match status" value="1"/>
</dbReference>
<dbReference type="PROSITE" id="PS00227">
    <property type="entry name" value="TUBULIN"/>
    <property type="match status" value="1"/>
</dbReference>
<organism>
    <name type="scientific">Haliotis discus</name>
    <name type="common">Abalone</name>
    <name type="synonym">Nordotis discus</name>
    <dbReference type="NCBI Taxonomy" id="36094"/>
    <lineage>
        <taxon>Eukaryota</taxon>
        <taxon>Metazoa</taxon>
        <taxon>Spiralia</taxon>
        <taxon>Lophotrochozoa</taxon>
        <taxon>Mollusca</taxon>
        <taxon>Gastropoda</taxon>
        <taxon>Vetigastropoda</taxon>
        <taxon>Lepetellida</taxon>
        <taxon>Haliotoidea</taxon>
        <taxon>Haliotidae</taxon>
        <taxon>Haliotis</taxon>
    </lineage>
</organism>
<accession>P41386</accession>
<protein>
    <recommendedName>
        <fullName>Tubulin beta chain</fullName>
    </recommendedName>
    <alternativeName>
        <fullName>Beta-tubulin</fullName>
    </alternativeName>
</protein>
<sequence length="341" mass="38179">SVRSGPFGQIFRPDNFVFGQSGAGNNWAKGHYTEGAELVDSVLDVVRKEAESCDCLQGFQLTHSLGGGTGSGMGTLLISKIREEYPDRIMNTFSVVPSPKVSDTVVEPYNATLSVHQLVENTDETYCIDNEALYDICFRTLKLTTPTYGDLNHLVSATMSGVTTCLRFPGQLNADLRKLAVNMVPFPRLHFFMPGFAPLTSRGSQQYRALTVPELTQQMFDAKNMMAACDPRHGRYLTVAAIFRGRMSMKEVDEQMLNVQNKNSSYFVEWIPNNVKTAVCDIPPRGLKMSATFIGNSTAIQELFKRISEQFTAMFRRKAFLHWYTGEGMDEMEFTEAESNM</sequence>
<keyword id="KW-0963">Cytoplasm</keyword>
<keyword id="KW-0206">Cytoskeleton</keyword>
<keyword id="KW-0342">GTP-binding</keyword>
<keyword id="KW-0493">Microtubule</keyword>
<keyword id="KW-0547">Nucleotide-binding</keyword>
<feature type="chain" id="PRO_0000048298" description="Tubulin beta chain">
    <location>
        <begin position="1" status="less than"/>
        <end position="341" status="greater than"/>
    </location>
</feature>
<feature type="binding site" evidence="2">
    <location>
        <position position="64"/>
    </location>
    <ligand>
        <name>GTP</name>
        <dbReference type="ChEBI" id="CHEBI:37565"/>
    </ligand>
</feature>
<feature type="binding site" evidence="2">
    <location>
        <position position="68"/>
    </location>
    <ligand>
        <name>GTP</name>
        <dbReference type="ChEBI" id="CHEBI:37565"/>
    </ligand>
</feature>
<feature type="binding site" evidence="2">
    <location>
        <position position="69"/>
    </location>
    <ligand>
        <name>GTP</name>
        <dbReference type="ChEBI" id="CHEBI:37565"/>
    </ligand>
</feature>
<feature type="binding site" evidence="2">
    <location>
        <position position="70"/>
    </location>
    <ligand>
        <name>GTP</name>
        <dbReference type="ChEBI" id="CHEBI:37565"/>
    </ligand>
</feature>
<feature type="binding site" evidence="2">
    <location>
        <position position="130"/>
    </location>
    <ligand>
        <name>GTP</name>
        <dbReference type="ChEBI" id="CHEBI:37565"/>
    </ligand>
</feature>
<feature type="binding site" evidence="2">
    <location>
        <position position="152"/>
    </location>
    <ligand>
        <name>GTP</name>
        <dbReference type="ChEBI" id="CHEBI:37565"/>
    </ligand>
</feature>
<feature type="non-terminal residue">
    <location>
        <position position="1"/>
    </location>
</feature>
<feature type="non-terminal residue">
    <location>
        <position position="341"/>
    </location>
</feature>
<name>TBB_HALDI</name>
<evidence type="ECO:0000250" key="1">
    <source>
        <dbReference type="UniProtKB" id="P68363"/>
    </source>
</evidence>
<evidence type="ECO:0000250" key="2">
    <source>
        <dbReference type="UniProtKB" id="Q13509"/>
    </source>
</evidence>
<evidence type="ECO:0000305" key="3"/>
<proteinExistence type="evidence at transcript level"/>
<reference key="1">
    <citation type="submission" date="1994-08" db="EMBL/GenBank/DDBJ databases">
        <authorList>
            <person name="Naganuma T."/>
            <person name="Akutsu T."/>
            <person name="Ishida T."/>
            <person name="Kato C."/>
            <person name="Horikoshi K."/>
        </authorList>
    </citation>
    <scope>NUCLEOTIDE SEQUENCE [MRNA]</scope>
    <source>
        <strain>Kuro / Numazu</strain>
    </source>
</reference>
<comment type="function">
    <text>Tubulin is the major constituent of microtubules, a cylinder consisting of laterally associated linear protofilaments composed of alpha- and beta-tubulin heterodimers. Microtubules grow by the addition of GTP-tubulin dimers to the microtubule end, where a stabilizing cap forms. Below the cap, tubulin dimers are in GDP-bound state, owing to GTPase activity of alpha-tubulin.</text>
</comment>
<comment type="cofactor">
    <cofactor evidence="1">
        <name>Mg(2+)</name>
        <dbReference type="ChEBI" id="CHEBI:18420"/>
    </cofactor>
</comment>
<comment type="subunit">
    <text>Dimer of alpha and beta chains. A typical microtubule is a hollow water-filled tube with an outer diameter of 25 nm and an inner diameter of 15 nM. Alpha-beta heterodimers associate head-to-tail to form protofilaments running lengthwise along the microtubule wall with the beta-tubulin subunit facing the microtubule plus end conferring a structural polarity. Microtubules usually have 13 protofilaments but different protofilament numbers can be found in some organisms and specialized cells.</text>
</comment>
<comment type="subcellular location">
    <subcellularLocation>
        <location>Cytoplasm</location>
        <location>Cytoskeleton</location>
    </subcellularLocation>
</comment>
<comment type="similarity">
    <text evidence="3">Belongs to the tubulin family.</text>
</comment>